<organism>
    <name type="scientific">Xylella fastidiosa (strain M23)</name>
    <dbReference type="NCBI Taxonomy" id="405441"/>
    <lineage>
        <taxon>Bacteria</taxon>
        <taxon>Pseudomonadati</taxon>
        <taxon>Pseudomonadota</taxon>
        <taxon>Gammaproteobacteria</taxon>
        <taxon>Lysobacterales</taxon>
        <taxon>Lysobacteraceae</taxon>
        <taxon>Xylella</taxon>
    </lineage>
</organism>
<sequence length="347" mass="39024">MLKKSDFHYDLPEELIAQGPLPERSASRLMLVPSAPEQFQDCYVRDLPELLQPGDLLVFNDTRVIPARLFGRKVSGGRVELLIERFLGTHQAVVQLRTSRSLKVGNRILLDAGGHAEVLGRDGEFYLLSFDVESPLEQWLSDVGQLPLPPYIHREPDEYDRERYQTVFARSVGAVAAPTAGLHFDESLLARLRARGVEFGYITLHVGAGTFQPVRVALLQEHVMHSEWFKVGAELVEQVRSARARGGRVIAVGTTVVRSLESAMRHGELQPFVGETQIFIFPGYCIRSVDAMVTNFHLPESTLLMLVAAFAGRTRILDAYYHAVQQRYRFFSYGDAMLLFPRNAGEQ</sequence>
<evidence type="ECO:0000255" key="1">
    <source>
        <dbReference type="HAMAP-Rule" id="MF_00113"/>
    </source>
</evidence>
<feature type="chain" id="PRO_1000094831" description="S-adenosylmethionine:tRNA ribosyltransferase-isomerase">
    <location>
        <begin position="1"/>
        <end position="347"/>
    </location>
</feature>
<gene>
    <name evidence="1" type="primary">queA</name>
    <name type="ordered locus">XfasM23_0592</name>
</gene>
<name>QUEA_XYLF2</name>
<protein>
    <recommendedName>
        <fullName evidence="1">S-adenosylmethionine:tRNA ribosyltransferase-isomerase</fullName>
        <ecNumber evidence="1">2.4.99.17</ecNumber>
    </recommendedName>
    <alternativeName>
        <fullName evidence="1">Queuosine biosynthesis protein QueA</fullName>
    </alternativeName>
</protein>
<proteinExistence type="inferred from homology"/>
<keyword id="KW-0963">Cytoplasm</keyword>
<keyword id="KW-0671">Queuosine biosynthesis</keyword>
<keyword id="KW-0949">S-adenosyl-L-methionine</keyword>
<keyword id="KW-0808">Transferase</keyword>
<dbReference type="EC" id="2.4.99.17" evidence="1"/>
<dbReference type="EMBL" id="CP001011">
    <property type="protein sequence ID" value="ACB92036.1"/>
    <property type="molecule type" value="Genomic_DNA"/>
</dbReference>
<dbReference type="SMR" id="B2I961"/>
<dbReference type="KEGG" id="xfn:XfasM23_0592"/>
<dbReference type="HOGENOM" id="CLU_039110_1_0_6"/>
<dbReference type="UniPathway" id="UPA00392"/>
<dbReference type="Proteomes" id="UP000001698">
    <property type="component" value="Chromosome"/>
</dbReference>
<dbReference type="GO" id="GO:0005737">
    <property type="term" value="C:cytoplasm"/>
    <property type="evidence" value="ECO:0007669"/>
    <property type="project" value="UniProtKB-SubCell"/>
</dbReference>
<dbReference type="GO" id="GO:0051075">
    <property type="term" value="F:S-adenosylmethionine:tRNA ribosyltransferase-isomerase activity"/>
    <property type="evidence" value="ECO:0007669"/>
    <property type="project" value="UniProtKB-EC"/>
</dbReference>
<dbReference type="GO" id="GO:0008616">
    <property type="term" value="P:queuosine biosynthetic process"/>
    <property type="evidence" value="ECO:0007669"/>
    <property type="project" value="UniProtKB-UniRule"/>
</dbReference>
<dbReference type="GO" id="GO:0002099">
    <property type="term" value="P:tRNA wobble guanine modification"/>
    <property type="evidence" value="ECO:0007669"/>
    <property type="project" value="TreeGrafter"/>
</dbReference>
<dbReference type="FunFam" id="3.40.1780.10:FF:000001">
    <property type="entry name" value="S-adenosylmethionine:tRNA ribosyltransferase-isomerase"/>
    <property type="match status" value="1"/>
</dbReference>
<dbReference type="Gene3D" id="2.40.10.240">
    <property type="entry name" value="QueA-like"/>
    <property type="match status" value="1"/>
</dbReference>
<dbReference type="Gene3D" id="3.40.1780.10">
    <property type="entry name" value="QueA-like"/>
    <property type="match status" value="1"/>
</dbReference>
<dbReference type="HAMAP" id="MF_00113">
    <property type="entry name" value="QueA"/>
    <property type="match status" value="1"/>
</dbReference>
<dbReference type="InterPro" id="IPR003699">
    <property type="entry name" value="QueA"/>
</dbReference>
<dbReference type="InterPro" id="IPR042118">
    <property type="entry name" value="QueA_dom1"/>
</dbReference>
<dbReference type="InterPro" id="IPR042119">
    <property type="entry name" value="QueA_dom2"/>
</dbReference>
<dbReference type="InterPro" id="IPR036100">
    <property type="entry name" value="QueA_sf"/>
</dbReference>
<dbReference type="NCBIfam" id="NF001140">
    <property type="entry name" value="PRK00147.1"/>
    <property type="match status" value="1"/>
</dbReference>
<dbReference type="NCBIfam" id="TIGR00113">
    <property type="entry name" value="queA"/>
    <property type="match status" value="1"/>
</dbReference>
<dbReference type="PANTHER" id="PTHR30307">
    <property type="entry name" value="S-ADENOSYLMETHIONINE:TRNA RIBOSYLTRANSFERASE-ISOMERASE"/>
    <property type="match status" value="1"/>
</dbReference>
<dbReference type="PANTHER" id="PTHR30307:SF0">
    <property type="entry name" value="S-ADENOSYLMETHIONINE:TRNA RIBOSYLTRANSFERASE-ISOMERASE"/>
    <property type="match status" value="1"/>
</dbReference>
<dbReference type="Pfam" id="PF02547">
    <property type="entry name" value="Queuosine_synth"/>
    <property type="match status" value="1"/>
</dbReference>
<dbReference type="SUPFAM" id="SSF111337">
    <property type="entry name" value="QueA-like"/>
    <property type="match status" value="1"/>
</dbReference>
<accession>B2I961</accession>
<reference key="1">
    <citation type="journal article" date="2010" name="J. Bacteriol.">
        <title>Whole genome sequences of two Xylella fastidiosa strains (M12 and M23) causing almond leaf scorch disease in California.</title>
        <authorList>
            <person name="Chen J."/>
            <person name="Xie G."/>
            <person name="Han S."/>
            <person name="Chertkov O."/>
            <person name="Sims D."/>
            <person name="Civerolo E.L."/>
        </authorList>
    </citation>
    <scope>NUCLEOTIDE SEQUENCE [LARGE SCALE GENOMIC DNA]</scope>
    <source>
        <strain>M23</strain>
    </source>
</reference>
<comment type="function">
    <text evidence="1">Transfers and isomerizes the ribose moiety from AdoMet to the 7-aminomethyl group of 7-deazaguanine (preQ1-tRNA) to give epoxyqueuosine (oQ-tRNA).</text>
</comment>
<comment type="catalytic activity">
    <reaction evidence="1">
        <text>7-aminomethyl-7-carbaguanosine(34) in tRNA + S-adenosyl-L-methionine = epoxyqueuosine(34) in tRNA + adenine + L-methionine + 2 H(+)</text>
        <dbReference type="Rhea" id="RHEA:32155"/>
        <dbReference type="Rhea" id="RHEA-COMP:10342"/>
        <dbReference type="Rhea" id="RHEA-COMP:18582"/>
        <dbReference type="ChEBI" id="CHEBI:15378"/>
        <dbReference type="ChEBI" id="CHEBI:16708"/>
        <dbReference type="ChEBI" id="CHEBI:57844"/>
        <dbReference type="ChEBI" id="CHEBI:59789"/>
        <dbReference type="ChEBI" id="CHEBI:82833"/>
        <dbReference type="ChEBI" id="CHEBI:194443"/>
        <dbReference type="EC" id="2.4.99.17"/>
    </reaction>
</comment>
<comment type="pathway">
    <text evidence="1">tRNA modification; tRNA-queuosine biosynthesis.</text>
</comment>
<comment type="subunit">
    <text evidence="1">Monomer.</text>
</comment>
<comment type="subcellular location">
    <subcellularLocation>
        <location evidence="1">Cytoplasm</location>
    </subcellularLocation>
</comment>
<comment type="similarity">
    <text evidence="1">Belongs to the QueA family.</text>
</comment>